<name>TIG_SYNS3</name>
<proteinExistence type="inferred from homology"/>
<feature type="chain" id="PRO_1000022775" description="Trigger factor">
    <location>
        <begin position="1"/>
        <end position="449"/>
    </location>
</feature>
<feature type="domain" description="PPIase FKBP-type" evidence="1">
    <location>
        <begin position="174"/>
        <end position="261"/>
    </location>
</feature>
<feature type="region of interest" description="Disordered" evidence="2">
    <location>
        <begin position="430"/>
        <end position="449"/>
    </location>
</feature>
<feature type="compositionally biased region" description="Basic and acidic residues" evidence="2">
    <location>
        <begin position="437"/>
        <end position="449"/>
    </location>
</feature>
<organism>
    <name type="scientific">Synechococcus sp. (strain CC9311)</name>
    <dbReference type="NCBI Taxonomy" id="64471"/>
    <lineage>
        <taxon>Bacteria</taxon>
        <taxon>Bacillati</taxon>
        <taxon>Cyanobacteriota</taxon>
        <taxon>Cyanophyceae</taxon>
        <taxon>Synechococcales</taxon>
        <taxon>Synechococcaceae</taxon>
        <taxon>Synechococcus</taxon>
    </lineage>
</organism>
<dbReference type="EC" id="5.2.1.8" evidence="1"/>
<dbReference type="EMBL" id="CP000435">
    <property type="protein sequence ID" value="ABI47177.1"/>
    <property type="molecule type" value="Genomic_DNA"/>
</dbReference>
<dbReference type="RefSeq" id="WP_011618055.1">
    <property type="nucleotide sequence ID" value="NC_008319.1"/>
</dbReference>
<dbReference type="SMR" id="Q0IE18"/>
<dbReference type="STRING" id="64471.sync_0066"/>
<dbReference type="KEGG" id="syg:sync_0066"/>
<dbReference type="eggNOG" id="COG0544">
    <property type="taxonomic scope" value="Bacteria"/>
</dbReference>
<dbReference type="HOGENOM" id="CLU_033058_3_1_3"/>
<dbReference type="OrthoDB" id="9767721at2"/>
<dbReference type="Proteomes" id="UP000001961">
    <property type="component" value="Chromosome"/>
</dbReference>
<dbReference type="GO" id="GO:0005737">
    <property type="term" value="C:cytoplasm"/>
    <property type="evidence" value="ECO:0007669"/>
    <property type="project" value="UniProtKB-SubCell"/>
</dbReference>
<dbReference type="GO" id="GO:0003755">
    <property type="term" value="F:peptidyl-prolyl cis-trans isomerase activity"/>
    <property type="evidence" value="ECO:0007669"/>
    <property type="project" value="UniProtKB-UniRule"/>
</dbReference>
<dbReference type="GO" id="GO:0044183">
    <property type="term" value="F:protein folding chaperone"/>
    <property type="evidence" value="ECO:0007669"/>
    <property type="project" value="TreeGrafter"/>
</dbReference>
<dbReference type="GO" id="GO:0043022">
    <property type="term" value="F:ribosome binding"/>
    <property type="evidence" value="ECO:0007669"/>
    <property type="project" value="TreeGrafter"/>
</dbReference>
<dbReference type="GO" id="GO:0051083">
    <property type="term" value="P:'de novo' cotranslational protein folding"/>
    <property type="evidence" value="ECO:0007669"/>
    <property type="project" value="TreeGrafter"/>
</dbReference>
<dbReference type="GO" id="GO:0051301">
    <property type="term" value="P:cell division"/>
    <property type="evidence" value="ECO:0007669"/>
    <property type="project" value="UniProtKB-KW"/>
</dbReference>
<dbReference type="GO" id="GO:0061077">
    <property type="term" value="P:chaperone-mediated protein folding"/>
    <property type="evidence" value="ECO:0007669"/>
    <property type="project" value="TreeGrafter"/>
</dbReference>
<dbReference type="GO" id="GO:0015031">
    <property type="term" value="P:protein transport"/>
    <property type="evidence" value="ECO:0007669"/>
    <property type="project" value="UniProtKB-UniRule"/>
</dbReference>
<dbReference type="GO" id="GO:0043335">
    <property type="term" value="P:protein unfolding"/>
    <property type="evidence" value="ECO:0007669"/>
    <property type="project" value="TreeGrafter"/>
</dbReference>
<dbReference type="FunFam" id="3.10.50.40:FF:000001">
    <property type="entry name" value="Trigger factor"/>
    <property type="match status" value="1"/>
</dbReference>
<dbReference type="FunFam" id="3.30.70.1050:FF:000004">
    <property type="entry name" value="Trigger factor"/>
    <property type="match status" value="1"/>
</dbReference>
<dbReference type="Gene3D" id="3.10.50.40">
    <property type="match status" value="1"/>
</dbReference>
<dbReference type="Gene3D" id="3.30.70.1050">
    <property type="entry name" value="Trigger factor ribosome-binding domain"/>
    <property type="match status" value="1"/>
</dbReference>
<dbReference type="Gene3D" id="1.10.3120.10">
    <property type="entry name" value="Trigger factor, C-terminal domain"/>
    <property type="match status" value="1"/>
</dbReference>
<dbReference type="HAMAP" id="MF_00303">
    <property type="entry name" value="Trigger_factor_Tig"/>
    <property type="match status" value="1"/>
</dbReference>
<dbReference type="InterPro" id="IPR046357">
    <property type="entry name" value="PPIase_dom_sf"/>
</dbReference>
<dbReference type="InterPro" id="IPR001179">
    <property type="entry name" value="PPIase_FKBP_dom"/>
</dbReference>
<dbReference type="InterPro" id="IPR005215">
    <property type="entry name" value="Trig_fac"/>
</dbReference>
<dbReference type="InterPro" id="IPR008880">
    <property type="entry name" value="Trigger_fac_C"/>
</dbReference>
<dbReference type="InterPro" id="IPR037041">
    <property type="entry name" value="Trigger_fac_C_sf"/>
</dbReference>
<dbReference type="InterPro" id="IPR008881">
    <property type="entry name" value="Trigger_fac_ribosome-bd_bac"/>
</dbReference>
<dbReference type="InterPro" id="IPR036611">
    <property type="entry name" value="Trigger_fac_ribosome-bd_sf"/>
</dbReference>
<dbReference type="InterPro" id="IPR027304">
    <property type="entry name" value="Trigger_fact/SurA_dom_sf"/>
</dbReference>
<dbReference type="NCBIfam" id="TIGR00115">
    <property type="entry name" value="tig"/>
    <property type="match status" value="1"/>
</dbReference>
<dbReference type="PANTHER" id="PTHR30560">
    <property type="entry name" value="TRIGGER FACTOR CHAPERONE AND PEPTIDYL-PROLYL CIS/TRANS ISOMERASE"/>
    <property type="match status" value="1"/>
</dbReference>
<dbReference type="PANTHER" id="PTHR30560:SF3">
    <property type="entry name" value="TRIGGER FACTOR-LIKE PROTEIN TIG, CHLOROPLASTIC"/>
    <property type="match status" value="1"/>
</dbReference>
<dbReference type="Pfam" id="PF00254">
    <property type="entry name" value="FKBP_C"/>
    <property type="match status" value="1"/>
</dbReference>
<dbReference type="Pfam" id="PF05698">
    <property type="entry name" value="Trigger_C"/>
    <property type="match status" value="1"/>
</dbReference>
<dbReference type="Pfam" id="PF05697">
    <property type="entry name" value="Trigger_N"/>
    <property type="match status" value="1"/>
</dbReference>
<dbReference type="PIRSF" id="PIRSF003095">
    <property type="entry name" value="Trigger_factor"/>
    <property type="match status" value="1"/>
</dbReference>
<dbReference type="SUPFAM" id="SSF54534">
    <property type="entry name" value="FKBP-like"/>
    <property type="match status" value="1"/>
</dbReference>
<dbReference type="SUPFAM" id="SSF109998">
    <property type="entry name" value="Triger factor/SurA peptide-binding domain-like"/>
    <property type="match status" value="1"/>
</dbReference>
<dbReference type="SUPFAM" id="SSF102735">
    <property type="entry name" value="Trigger factor ribosome-binding domain"/>
    <property type="match status" value="1"/>
</dbReference>
<dbReference type="PROSITE" id="PS50059">
    <property type="entry name" value="FKBP_PPIASE"/>
    <property type="match status" value="1"/>
</dbReference>
<keyword id="KW-0131">Cell cycle</keyword>
<keyword id="KW-0132">Cell division</keyword>
<keyword id="KW-0143">Chaperone</keyword>
<keyword id="KW-0963">Cytoplasm</keyword>
<keyword id="KW-0413">Isomerase</keyword>
<keyword id="KW-1185">Reference proteome</keyword>
<keyword id="KW-0697">Rotamase</keyword>
<accession>Q0IE18</accession>
<evidence type="ECO:0000255" key="1">
    <source>
        <dbReference type="HAMAP-Rule" id="MF_00303"/>
    </source>
</evidence>
<evidence type="ECO:0000256" key="2">
    <source>
        <dbReference type="SAM" id="MobiDB-lite"/>
    </source>
</evidence>
<comment type="function">
    <text evidence="1">Involved in protein export. Acts as a chaperone by maintaining the newly synthesized protein in an open conformation. Functions as a peptidyl-prolyl cis-trans isomerase.</text>
</comment>
<comment type="catalytic activity">
    <reaction evidence="1">
        <text>[protein]-peptidylproline (omega=180) = [protein]-peptidylproline (omega=0)</text>
        <dbReference type="Rhea" id="RHEA:16237"/>
        <dbReference type="Rhea" id="RHEA-COMP:10747"/>
        <dbReference type="Rhea" id="RHEA-COMP:10748"/>
        <dbReference type="ChEBI" id="CHEBI:83833"/>
        <dbReference type="ChEBI" id="CHEBI:83834"/>
        <dbReference type="EC" id="5.2.1.8"/>
    </reaction>
</comment>
<comment type="subcellular location">
    <subcellularLocation>
        <location>Cytoplasm</location>
    </subcellularLocation>
    <text evidence="1">About half TF is bound to the ribosome near the polypeptide exit tunnel while the other half is free in the cytoplasm.</text>
</comment>
<comment type="domain">
    <text evidence="1">Consists of 3 domains; the N-terminus binds the ribosome, the middle domain has PPIase activity, while the C-terminus has intrinsic chaperone activity on its own.</text>
</comment>
<comment type="similarity">
    <text evidence="1">Belongs to the FKBP-type PPIase family. Tig subfamily.</text>
</comment>
<protein>
    <recommendedName>
        <fullName evidence="1">Trigger factor</fullName>
        <shortName evidence="1">TF</shortName>
        <ecNumber evidence="1">5.2.1.8</ecNumber>
    </recommendedName>
    <alternativeName>
        <fullName evidence="1">PPIase</fullName>
    </alternativeName>
</protein>
<sequence>MSAASLKVTSTARPGSRLAVEVAIPAERSQASYEAAISQLSRSVNLPGFRKGKVPRSVLVQQLGGLRIRATALENLVDAIWRDTIKQETIEALGQPEVDGGYEALLESFEPGKPLSITFEADVAPTPTLKTTKGLKAEAESVSFDAAKVDEMLEQSRRQLATVVPVEGRKAAQGDIAVVGFKGTYSDDGSEIEGGSSESMDVDLEHGRMIPGFIEGVVGMTVGDSKTVACNFPEDYPKEDARGRKASFEIELKDLKTRELPDLDDDFAKQASEQETLAELRTDLEKRLKDDAERRTTSNRRDALLAALVEQLEVELPETLVQQEVRNLVEQTAAQFSQQGMDVKSLFTPDLVRNLMETSRPEAEERLRRSLALSALAEAESLKIEDPEIDAKVKEVTAQLSGERDIDPNRLRQAVIEDLLQEKLLGWLEENSTVTEKAPDKDKPSVTDA</sequence>
<reference key="1">
    <citation type="journal article" date="2006" name="Proc. Natl. Acad. Sci. U.S.A.">
        <title>Genome sequence of Synechococcus CC9311: insights into adaptation to a coastal environment.</title>
        <authorList>
            <person name="Palenik B."/>
            <person name="Ren Q."/>
            <person name="Dupont C.L."/>
            <person name="Myers G.S."/>
            <person name="Heidelberg J.F."/>
            <person name="Badger J.H."/>
            <person name="Madupu R."/>
            <person name="Nelson W.C."/>
            <person name="Brinkac L.M."/>
            <person name="Dodson R.J."/>
            <person name="Durkin A.S."/>
            <person name="Daugherty S.C."/>
            <person name="Sullivan S.A."/>
            <person name="Khouri H."/>
            <person name="Mohamoud Y."/>
            <person name="Halpin R."/>
            <person name="Paulsen I.T."/>
        </authorList>
    </citation>
    <scope>NUCLEOTIDE SEQUENCE [LARGE SCALE GENOMIC DNA]</scope>
    <source>
        <strain>CC9311</strain>
    </source>
</reference>
<gene>
    <name evidence="1" type="primary">tig</name>
    <name type="ordered locus">sync_0066</name>
</gene>